<name>THII_STAAC</name>
<comment type="function">
    <text evidence="1">Catalyzes the ATP-dependent transfer of a sulfur to tRNA to produce 4-thiouridine in position 8 of tRNAs, which functions as a near-UV photosensor. Also catalyzes the transfer of sulfur to the sulfur carrier protein ThiS, forming ThiS-thiocarboxylate. This is a step in the synthesis of thiazole, in the thiamine biosynthesis pathway. The sulfur is donated as persulfide by IscS.</text>
</comment>
<comment type="catalytic activity">
    <reaction evidence="1">
        <text>[ThiI sulfur-carrier protein]-S-sulfanyl-L-cysteine + a uridine in tRNA + 2 reduced [2Fe-2S]-[ferredoxin] + ATP + H(+) = [ThiI sulfur-carrier protein]-L-cysteine + a 4-thiouridine in tRNA + 2 oxidized [2Fe-2S]-[ferredoxin] + AMP + diphosphate</text>
        <dbReference type="Rhea" id="RHEA:24176"/>
        <dbReference type="Rhea" id="RHEA-COMP:10000"/>
        <dbReference type="Rhea" id="RHEA-COMP:10001"/>
        <dbReference type="Rhea" id="RHEA-COMP:13337"/>
        <dbReference type="Rhea" id="RHEA-COMP:13338"/>
        <dbReference type="Rhea" id="RHEA-COMP:13339"/>
        <dbReference type="Rhea" id="RHEA-COMP:13340"/>
        <dbReference type="ChEBI" id="CHEBI:15378"/>
        <dbReference type="ChEBI" id="CHEBI:29950"/>
        <dbReference type="ChEBI" id="CHEBI:30616"/>
        <dbReference type="ChEBI" id="CHEBI:33019"/>
        <dbReference type="ChEBI" id="CHEBI:33737"/>
        <dbReference type="ChEBI" id="CHEBI:33738"/>
        <dbReference type="ChEBI" id="CHEBI:61963"/>
        <dbReference type="ChEBI" id="CHEBI:65315"/>
        <dbReference type="ChEBI" id="CHEBI:136798"/>
        <dbReference type="ChEBI" id="CHEBI:456215"/>
        <dbReference type="EC" id="2.8.1.4"/>
    </reaction>
</comment>
<comment type="catalytic activity">
    <reaction evidence="1">
        <text>[ThiS sulfur-carrier protein]-C-terminal Gly-Gly-AMP + S-sulfanyl-L-cysteinyl-[cysteine desulfurase] + AH2 = [ThiS sulfur-carrier protein]-C-terminal-Gly-aminoethanethioate + L-cysteinyl-[cysteine desulfurase] + A + AMP + 2 H(+)</text>
        <dbReference type="Rhea" id="RHEA:43340"/>
        <dbReference type="Rhea" id="RHEA-COMP:12157"/>
        <dbReference type="Rhea" id="RHEA-COMP:12158"/>
        <dbReference type="Rhea" id="RHEA-COMP:12910"/>
        <dbReference type="Rhea" id="RHEA-COMP:19908"/>
        <dbReference type="ChEBI" id="CHEBI:13193"/>
        <dbReference type="ChEBI" id="CHEBI:15378"/>
        <dbReference type="ChEBI" id="CHEBI:17499"/>
        <dbReference type="ChEBI" id="CHEBI:29950"/>
        <dbReference type="ChEBI" id="CHEBI:61963"/>
        <dbReference type="ChEBI" id="CHEBI:90618"/>
        <dbReference type="ChEBI" id="CHEBI:232372"/>
        <dbReference type="ChEBI" id="CHEBI:456215"/>
    </reaction>
</comment>
<comment type="pathway">
    <text evidence="1">Cofactor biosynthesis; thiamine diphosphate biosynthesis.</text>
</comment>
<comment type="subcellular location">
    <subcellularLocation>
        <location evidence="1">Cytoplasm</location>
    </subcellularLocation>
</comment>
<comment type="similarity">
    <text evidence="1">Belongs to the ThiI family.</text>
</comment>
<evidence type="ECO:0000255" key="1">
    <source>
        <dbReference type="HAMAP-Rule" id="MF_00021"/>
    </source>
</evidence>
<proteinExistence type="inferred from homology"/>
<sequence>MKYDHLLVRYGELTLKGSNRKKFVNQLRNNVNKSLKGLDGFVVKGKRDRMYIELEDHADINEITYRLSKIFGIKSISPVLKVEKTIEAISAAAIKFAQQFEENSTFKIDVKRADKNFPMDTYELQRELGGAVLKHFDNISVNVKRPDHEIRVEVRLDAIYMYEEVVPGSGGLPVGTGGKTLLMLSGGIDSPVAGMEVMRRGVTIEAIHFHSPPFTSDQAKEKVIELTRILAERVGPIKLHIVPFTELQKQVNKVVHPRYTMTSTRRMMMRVADKLVHQIGALAIVNGENLGQVASQTLHSMYAINNVTSTPVLRPLLTYDKEEIIIKSKEIGTFETSIQPFEDCCTIFTPKNPVTEPNFDKVVQYESVFDFEEMINRAVENIETLEITSDYKTIKEQQTNQLINDFL</sequence>
<dbReference type="EC" id="2.8.1.4" evidence="1"/>
<dbReference type="EMBL" id="CP000046">
    <property type="protein sequence ID" value="AAW38293.1"/>
    <property type="molecule type" value="Genomic_DNA"/>
</dbReference>
<dbReference type="RefSeq" id="WP_000872653.1">
    <property type="nucleotide sequence ID" value="NZ_JBGOFO010000008.1"/>
</dbReference>
<dbReference type="SMR" id="Q5HF59"/>
<dbReference type="KEGG" id="sac:SACOL1764"/>
<dbReference type="HOGENOM" id="CLU_037952_4_0_9"/>
<dbReference type="UniPathway" id="UPA00060"/>
<dbReference type="Proteomes" id="UP000000530">
    <property type="component" value="Chromosome"/>
</dbReference>
<dbReference type="GO" id="GO:0005829">
    <property type="term" value="C:cytosol"/>
    <property type="evidence" value="ECO:0007669"/>
    <property type="project" value="TreeGrafter"/>
</dbReference>
<dbReference type="GO" id="GO:0005524">
    <property type="term" value="F:ATP binding"/>
    <property type="evidence" value="ECO:0007669"/>
    <property type="project" value="UniProtKB-UniRule"/>
</dbReference>
<dbReference type="GO" id="GO:0004810">
    <property type="term" value="F:CCA tRNA nucleotidyltransferase activity"/>
    <property type="evidence" value="ECO:0007669"/>
    <property type="project" value="InterPro"/>
</dbReference>
<dbReference type="GO" id="GO:0000049">
    <property type="term" value="F:tRNA binding"/>
    <property type="evidence" value="ECO:0007669"/>
    <property type="project" value="UniProtKB-UniRule"/>
</dbReference>
<dbReference type="GO" id="GO:0140741">
    <property type="term" value="F:tRNA-uracil-4 sulfurtransferase activity"/>
    <property type="evidence" value="ECO:0007669"/>
    <property type="project" value="UniProtKB-EC"/>
</dbReference>
<dbReference type="GO" id="GO:0009228">
    <property type="term" value="P:thiamine biosynthetic process"/>
    <property type="evidence" value="ECO:0007669"/>
    <property type="project" value="UniProtKB-KW"/>
</dbReference>
<dbReference type="GO" id="GO:0009229">
    <property type="term" value="P:thiamine diphosphate biosynthetic process"/>
    <property type="evidence" value="ECO:0007669"/>
    <property type="project" value="UniProtKB-UniRule"/>
</dbReference>
<dbReference type="GO" id="GO:0052837">
    <property type="term" value="P:thiazole biosynthetic process"/>
    <property type="evidence" value="ECO:0007669"/>
    <property type="project" value="TreeGrafter"/>
</dbReference>
<dbReference type="GO" id="GO:0002937">
    <property type="term" value="P:tRNA 4-thiouridine biosynthesis"/>
    <property type="evidence" value="ECO:0007669"/>
    <property type="project" value="TreeGrafter"/>
</dbReference>
<dbReference type="CDD" id="cd01712">
    <property type="entry name" value="PPase_ThiI"/>
    <property type="match status" value="1"/>
</dbReference>
<dbReference type="CDD" id="cd11716">
    <property type="entry name" value="THUMP_ThiI"/>
    <property type="match status" value="1"/>
</dbReference>
<dbReference type="FunFam" id="3.30.2130.30:FF:000009">
    <property type="entry name" value="Probable tRNA sulfurtransferase"/>
    <property type="match status" value="1"/>
</dbReference>
<dbReference type="FunFam" id="3.40.50.620:FF:000053">
    <property type="entry name" value="Probable tRNA sulfurtransferase"/>
    <property type="match status" value="1"/>
</dbReference>
<dbReference type="Gene3D" id="3.30.2130.30">
    <property type="match status" value="1"/>
</dbReference>
<dbReference type="Gene3D" id="3.40.50.620">
    <property type="entry name" value="HUPs"/>
    <property type="match status" value="1"/>
</dbReference>
<dbReference type="HAMAP" id="MF_00021">
    <property type="entry name" value="ThiI"/>
    <property type="match status" value="1"/>
</dbReference>
<dbReference type="InterPro" id="IPR014729">
    <property type="entry name" value="Rossmann-like_a/b/a_fold"/>
</dbReference>
<dbReference type="InterPro" id="IPR020536">
    <property type="entry name" value="ThiI_AANH"/>
</dbReference>
<dbReference type="InterPro" id="IPR054173">
    <property type="entry name" value="ThiI_fer"/>
</dbReference>
<dbReference type="InterPro" id="IPR049961">
    <property type="entry name" value="ThiI_N"/>
</dbReference>
<dbReference type="InterPro" id="IPR004114">
    <property type="entry name" value="THUMP_dom"/>
</dbReference>
<dbReference type="InterPro" id="IPR049962">
    <property type="entry name" value="THUMP_ThiI"/>
</dbReference>
<dbReference type="InterPro" id="IPR003720">
    <property type="entry name" value="tRNA_STrfase"/>
</dbReference>
<dbReference type="InterPro" id="IPR050102">
    <property type="entry name" value="tRNA_sulfurtransferase_ThiI"/>
</dbReference>
<dbReference type="NCBIfam" id="TIGR00342">
    <property type="entry name" value="tRNA uracil 4-sulfurtransferase ThiI"/>
    <property type="match status" value="1"/>
</dbReference>
<dbReference type="PANTHER" id="PTHR43209">
    <property type="entry name" value="TRNA SULFURTRANSFERASE"/>
    <property type="match status" value="1"/>
</dbReference>
<dbReference type="PANTHER" id="PTHR43209:SF1">
    <property type="entry name" value="TRNA SULFURTRANSFERASE"/>
    <property type="match status" value="1"/>
</dbReference>
<dbReference type="Pfam" id="PF02568">
    <property type="entry name" value="ThiI"/>
    <property type="match status" value="1"/>
</dbReference>
<dbReference type="Pfam" id="PF22025">
    <property type="entry name" value="ThiI_fer"/>
    <property type="match status" value="1"/>
</dbReference>
<dbReference type="Pfam" id="PF02926">
    <property type="entry name" value="THUMP"/>
    <property type="match status" value="1"/>
</dbReference>
<dbReference type="SMART" id="SM00981">
    <property type="entry name" value="THUMP"/>
    <property type="match status" value="1"/>
</dbReference>
<dbReference type="SUPFAM" id="SSF52402">
    <property type="entry name" value="Adenine nucleotide alpha hydrolases-like"/>
    <property type="match status" value="1"/>
</dbReference>
<dbReference type="SUPFAM" id="SSF143437">
    <property type="entry name" value="THUMP domain-like"/>
    <property type="match status" value="1"/>
</dbReference>
<dbReference type="PROSITE" id="PS51165">
    <property type="entry name" value="THUMP"/>
    <property type="match status" value="1"/>
</dbReference>
<reference key="1">
    <citation type="journal article" date="2005" name="J. Bacteriol.">
        <title>Insights on evolution of virulence and resistance from the complete genome analysis of an early methicillin-resistant Staphylococcus aureus strain and a biofilm-producing methicillin-resistant Staphylococcus epidermidis strain.</title>
        <authorList>
            <person name="Gill S.R."/>
            <person name="Fouts D.E."/>
            <person name="Archer G.L."/>
            <person name="Mongodin E.F."/>
            <person name="DeBoy R.T."/>
            <person name="Ravel J."/>
            <person name="Paulsen I.T."/>
            <person name="Kolonay J.F."/>
            <person name="Brinkac L.M."/>
            <person name="Beanan M.J."/>
            <person name="Dodson R.J."/>
            <person name="Daugherty S.C."/>
            <person name="Madupu R."/>
            <person name="Angiuoli S.V."/>
            <person name="Durkin A.S."/>
            <person name="Haft D.H."/>
            <person name="Vamathevan J.J."/>
            <person name="Khouri H."/>
            <person name="Utterback T.R."/>
            <person name="Lee C."/>
            <person name="Dimitrov G."/>
            <person name="Jiang L."/>
            <person name="Qin H."/>
            <person name="Weidman J."/>
            <person name="Tran K."/>
            <person name="Kang K.H."/>
            <person name="Hance I.R."/>
            <person name="Nelson K.E."/>
            <person name="Fraser C.M."/>
        </authorList>
    </citation>
    <scope>NUCLEOTIDE SEQUENCE [LARGE SCALE GENOMIC DNA]</scope>
    <source>
        <strain>COL</strain>
    </source>
</reference>
<keyword id="KW-0067">ATP-binding</keyword>
<keyword id="KW-0963">Cytoplasm</keyword>
<keyword id="KW-0547">Nucleotide-binding</keyword>
<keyword id="KW-0694">RNA-binding</keyword>
<keyword id="KW-0784">Thiamine biosynthesis</keyword>
<keyword id="KW-0808">Transferase</keyword>
<keyword id="KW-0820">tRNA-binding</keyword>
<feature type="chain" id="PRO_0000154863" description="Probable tRNA sulfurtransferase">
    <location>
        <begin position="1"/>
        <end position="407"/>
    </location>
</feature>
<feature type="domain" description="THUMP" evidence="1">
    <location>
        <begin position="61"/>
        <end position="165"/>
    </location>
</feature>
<feature type="binding site" evidence="1">
    <location>
        <begin position="183"/>
        <end position="184"/>
    </location>
    <ligand>
        <name>ATP</name>
        <dbReference type="ChEBI" id="CHEBI:30616"/>
    </ligand>
</feature>
<feature type="binding site" evidence="1">
    <location>
        <begin position="208"/>
        <end position="209"/>
    </location>
    <ligand>
        <name>ATP</name>
        <dbReference type="ChEBI" id="CHEBI:30616"/>
    </ligand>
</feature>
<feature type="binding site" evidence="1">
    <location>
        <position position="265"/>
    </location>
    <ligand>
        <name>ATP</name>
        <dbReference type="ChEBI" id="CHEBI:30616"/>
    </ligand>
</feature>
<feature type="binding site" evidence="1">
    <location>
        <position position="287"/>
    </location>
    <ligand>
        <name>ATP</name>
        <dbReference type="ChEBI" id="CHEBI:30616"/>
    </ligand>
</feature>
<feature type="binding site" evidence="1">
    <location>
        <position position="296"/>
    </location>
    <ligand>
        <name>ATP</name>
        <dbReference type="ChEBI" id="CHEBI:30616"/>
    </ligand>
</feature>
<organism>
    <name type="scientific">Staphylococcus aureus (strain COL)</name>
    <dbReference type="NCBI Taxonomy" id="93062"/>
    <lineage>
        <taxon>Bacteria</taxon>
        <taxon>Bacillati</taxon>
        <taxon>Bacillota</taxon>
        <taxon>Bacilli</taxon>
        <taxon>Bacillales</taxon>
        <taxon>Staphylococcaceae</taxon>
        <taxon>Staphylococcus</taxon>
    </lineage>
</organism>
<protein>
    <recommendedName>
        <fullName evidence="1">Probable tRNA sulfurtransferase</fullName>
        <ecNumber evidence="1">2.8.1.4</ecNumber>
    </recommendedName>
    <alternativeName>
        <fullName evidence="1">Sulfur carrier protein ThiS sulfurtransferase</fullName>
    </alternativeName>
    <alternativeName>
        <fullName evidence="1">Thiamine biosynthesis protein ThiI</fullName>
    </alternativeName>
    <alternativeName>
        <fullName evidence="1">tRNA 4-thiouridine synthase</fullName>
    </alternativeName>
</protein>
<accession>Q5HF59</accession>
<gene>
    <name evidence="1" type="primary">thiI</name>
    <name type="ordered locus">SACOL1764</name>
</gene>